<keyword id="KW-0249">Electron transport</keyword>
<keyword id="KW-0349">Heme</keyword>
<keyword id="KW-0408">Iron</keyword>
<keyword id="KW-0472">Membrane</keyword>
<keyword id="KW-0479">Metal-binding</keyword>
<keyword id="KW-0496">Mitochondrion</keyword>
<keyword id="KW-0999">Mitochondrion inner membrane</keyword>
<keyword id="KW-0679">Respiratory chain</keyword>
<keyword id="KW-0812">Transmembrane</keyword>
<keyword id="KW-1133">Transmembrane helix</keyword>
<keyword id="KW-0813">Transport</keyword>
<keyword id="KW-0830">Ubiquinone</keyword>
<dbReference type="EMBL" id="AB085733">
    <property type="protein sequence ID" value="BAC16627.1"/>
    <property type="molecule type" value="Genomic_DNA"/>
</dbReference>
<dbReference type="SMR" id="Q8HQF1"/>
<dbReference type="GO" id="GO:0005743">
    <property type="term" value="C:mitochondrial inner membrane"/>
    <property type="evidence" value="ECO:0007669"/>
    <property type="project" value="UniProtKB-SubCell"/>
</dbReference>
<dbReference type="GO" id="GO:0045275">
    <property type="term" value="C:respiratory chain complex III"/>
    <property type="evidence" value="ECO:0007669"/>
    <property type="project" value="InterPro"/>
</dbReference>
<dbReference type="GO" id="GO:0046872">
    <property type="term" value="F:metal ion binding"/>
    <property type="evidence" value="ECO:0007669"/>
    <property type="project" value="UniProtKB-KW"/>
</dbReference>
<dbReference type="GO" id="GO:0008121">
    <property type="term" value="F:ubiquinol-cytochrome-c reductase activity"/>
    <property type="evidence" value="ECO:0007669"/>
    <property type="project" value="InterPro"/>
</dbReference>
<dbReference type="GO" id="GO:0006122">
    <property type="term" value="P:mitochondrial electron transport, ubiquinol to cytochrome c"/>
    <property type="evidence" value="ECO:0007669"/>
    <property type="project" value="TreeGrafter"/>
</dbReference>
<dbReference type="CDD" id="cd00290">
    <property type="entry name" value="cytochrome_b_C"/>
    <property type="match status" value="1"/>
</dbReference>
<dbReference type="CDD" id="cd00284">
    <property type="entry name" value="Cytochrome_b_N"/>
    <property type="match status" value="1"/>
</dbReference>
<dbReference type="FunFam" id="1.20.810.10:FF:000002">
    <property type="entry name" value="Cytochrome b"/>
    <property type="match status" value="1"/>
</dbReference>
<dbReference type="Gene3D" id="1.20.810.10">
    <property type="entry name" value="Cytochrome Bc1 Complex, Chain C"/>
    <property type="match status" value="1"/>
</dbReference>
<dbReference type="InterPro" id="IPR005798">
    <property type="entry name" value="Cyt_b/b6_C"/>
</dbReference>
<dbReference type="InterPro" id="IPR036150">
    <property type="entry name" value="Cyt_b/b6_C_sf"/>
</dbReference>
<dbReference type="InterPro" id="IPR005797">
    <property type="entry name" value="Cyt_b/b6_N"/>
</dbReference>
<dbReference type="InterPro" id="IPR027387">
    <property type="entry name" value="Cytb/b6-like_sf"/>
</dbReference>
<dbReference type="InterPro" id="IPR030689">
    <property type="entry name" value="Cytochrome_b"/>
</dbReference>
<dbReference type="InterPro" id="IPR048260">
    <property type="entry name" value="Cytochrome_b_C_euk/bac"/>
</dbReference>
<dbReference type="InterPro" id="IPR048259">
    <property type="entry name" value="Cytochrome_b_N_euk/bac"/>
</dbReference>
<dbReference type="InterPro" id="IPR016174">
    <property type="entry name" value="Di-haem_cyt_TM"/>
</dbReference>
<dbReference type="PANTHER" id="PTHR19271">
    <property type="entry name" value="CYTOCHROME B"/>
    <property type="match status" value="1"/>
</dbReference>
<dbReference type="PANTHER" id="PTHR19271:SF16">
    <property type="entry name" value="CYTOCHROME B"/>
    <property type="match status" value="1"/>
</dbReference>
<dbReference type="Pfam" id="PF00032">
    <property type="entry name" value="Cytochrom_B_C"/>
    <property type="match status" value="1"/>
</dbReference>
<dbReference type="Pfam" id="PF00033">
    <property type="entry name" value="Cytochrome_B"/>
    <property type="match status" value="1"/>
</dbReference>
<dbReference type="PIRSF" id="PIRSF038885">
    <property type="entry name" value="COB"/>
    <property type="match status" value="1"/>
</dbReference>
<dbReference type="SUPFAM" id="SSF81648">
    <property type="entry name" value="a domain/subunit of cytochrome bc1 complex (Ubiquinol-cytochrome c reductase)"/>
    <property type="match status" value="1"/>
</dbReference>
<dbReference type="SUPFAM" id="SSF81342">
    <property type="entry name" value="Transmembrane di-heme cytochromes"/>
    <property type="match status" value="1"/>
</dbReference>
<dbReference type="PROSITE" id="PS51003">
    <property type="entry name" value="CYTB_CTER"/>
    <property type="match status" value="1"/>
</dbReference>
<dbReference type="PROSITE" id="PS51002">
    <property type="entry name" value="CYTB_NTER"/>
    <property type="match status" value="1"/>
</dbReference>
<geneLocation type="mitochondrion"/>
<proteinExistence type="inferred from homology"/>
<sequence length="379" mass="42843">MTNIRKSHPLMKIINNSFIDLPAPSNISSWWNFGSLLGICLALQILTGLFLAMHYTSDTMTAFNSVTHICRDVNYGWVLRYLHANGASMFFICLYLHIGRGLYYGSYMYKETWNIGIILLFTVMATAFMGYVLPWGQMSFWGATVITNLLSAIPYIGTDLVEWIWGGFSVDKATLTRFFAFHFLLPFIISAMVMVHLLFLHETGSNNPTGIPSNMDMIPFHPYYTIKDILGLLIMMTALLALVLFSPDALGDPDNYMPANPLNTPPHIKPEWYFLFAYAILRSIPNKLGGVLALVLSILVLVIIPFLHTSKQRSMTFRPLSQCLFWLLAADLLTLTWIGGQPVEHPYIIIGQLASILYFSIIIILMPLAGLVENHLMKW</sequence>
<feature type="chain" id="PRO_0000061216" description="Cytochrome b">
    <location>
        <begin position="1"/>
        <end position="379"/>
    </location>
</feature>
<feature type="transmembrane region" description="Helical" evidence="2">
    <location>
        <begin position="33"/>
        <end position="53"/>
    </location>
</feature>
<feature type="transmembrane region" description="Helical" evidence="2">
    <location>
        <begin position="77"/>
        <end position="98"/>
    </location>
</feature>
<feature type="transmembrane region" description="Helical" evidence="2">
    <location>
        <begin position="113"/>
        <end position="133"/>
    </location>
</feature>
<feature type="transmembrane region" description="Helical" evidence="2">
    <location>
        <begin position="178"/>
        <end position="198"/>
    </location>
</feature>
<feature type="transmembrane region" description="Helical" evidence="2">
    <location>
        <begin position="226"/>
        <end position="246"/>
    </location>
</feature>
<feature type="transmembrane region" description="Helical" evidence="2">
    <location>
        <begin position="288"/>
        <end position="308"/>
    </location>
</feature>
<feature type="transmembrane region" description="Helical" evidence="2">
    <location>
        <begin position="320"/>
        <end position="340"/>
    </location>
</feature>
<feature type="transmembrane region" description="Helical" evidence="2">
    <location>
        <begin position="347"/>
        <end position="367"/>
    </location>
</feature>
<feature type="binding site" description="axial binding residue" evidence="2">
    <location>
        <position position="83"/>
    </location>
    <ligand>
        <name>heme b</name>
        <dbReference type="ChEBI" id="CHEBI:60344"/>
        <label>b562</label>
    </ligand>
    <ligandPart>
        <name>Fe</name>
        <dbReference type="ChEBI" id="CHEBI:18248"/>
    </ligandPart>
</feature>
<feature type="binding site" description="axial binding residue" evidence="2">
    <location>
        <position position="97"/>
    </location>
    <ligand>
        <name>heme b</name>
        <dbReference type="ChEBI" id="CHEBI:60344"/>
        <label>b566</label>
    </ligand>
    <ligandPart>
        <name>Fe</name>
        <dbReference type="ChEBI" id="CHEBI:18248"/>
    </ligandPart>
</feature>
<feature type="binding site" description="axial binding residue" evidence="2">
    <location>
        <position position="182"/>
    </location>
    <ligand>
        <name>heme b</name>
        <dbReference type="ChEBI" id="CHEBI:60344"/>
        <label>b562</label>
    </ligand>
    <ligandPart>
        <name>Fe</name>
        <dbReference type="ChEBI" id="CHEBI:18248"/>
    </ligandPart>
</feature>
<feature type="binding site" description="axial binding residue" evidence="2">
    <location>
        <position position="196"/>
    </location>
    <ligand>
        <name>heme b</name>
        <dbReference type="ChEBI" id="CHEBI:60344"/>
        <label>b566</label>
    </ligand>
    <ligandPart>
        <name>Fe</name>
        <dbReference type="ChEBI" id="CHEBI:18248"/>
    </ligandPart>
</feature>
<feature type="binding site" evidence="2">
    <location>
        <position position="201"/>
    </location>
    <ligand>
        <name>a ubiquinone</name>
        <dbReference type="ChEBI" id="CHEBI:16389"/>
    </ligand>
</feature>
<reference key="1">
    <citation type="journal article" date="2003" name="Genes Genet. Syst.">
        <title>Molecular phylogeny of Japanese Rhinolophidae based on variations in the complete sequence of the mitochondrial cytochrome b gene.</title>
        <authorList>
            <person name="Sakai T."/>
            <person name="Kikkawa Y."/>
            <person name="Tuchiya K."/>
            <person name="Harada M."/>
            <person name="Kanoe M."/>
            <person name="Yoshiyuki M."/>
            <person name="Yonekawa H."/>
        </authorList>
    </citation>
    <scope>NUCLEOTIDE SEQUENCE [GENOMIC DNA]</scope>
</reference>
<name>CYB_MURLE</name>
<accession>Q8HQF1</accession>
<evidence type="ECO:0000250" key="1"/>
<evidence type="ECO:0000250" key="2">
    <source>
        <dbReference type="UniProtKB" id="P00157"/>
    </source>
</evidence>
<evidence type="ECO:0000255" key="3">
    <source>
        <dbReference type="PROSITE-ProRule" id="PRU00967"/>
    </source>
</evidence>
<evidence type="ECO:0000255" key="4">
    <source>
        <dbReference type="PROSITE-ProRule" id="PRU00968"/>
    </source>
</evidence>
<protein>
    <recommendedName>
        <fullName>Cytochrome b</fullName>
    </recommendedName>
    <alternativeName>
        <fullName>Complex III subunit 3</fullName>
    </alternativeName>
    <alternativeName>
        <fullName>Complex III subunit III</fullName>
    </alternativeName>
    <alternativeName>
        <fullName>Cytochrome b-c1 complex subunit 3</fullName>
    </alternativeName>
    <alternativeName>
        <fullName>Ubiquinol-cytochrome-c reductase complex cytochrome b subunit</fullName>
    </alternativeName>
</protein>
<gene>
    <name type="primary">MT-CYB</name>
    <name type="synonym">COB</name>
    <name type="synonym">CYTB</name>
    <name type="synonym">MTCYB</name>
</gene>
<comment type="function">
    <text evidence="2">Component of the ubiquinol-cytochrome c reductase complex (complex III or cytochrome b-c1 complex) that is part of the mitochondrial respiratory chain. The b-c1 complex mediates electron transfer from ubiquinol to cytochrome c. Contributes to the generation of a proton gradient across the mitochondrial membrane that is then used for ATP synthesis.</text>
</comment>
<comment type="cofactor">
    <cofactor evidence="2">
        <name>heme b</name>
        <dbReference type="ChEBI" id="CHEBI:60344"/>
    </cofactor>
    <text evidence="2">Binds 2 heme b groups non-covalently.</text>
</comment>
<comment type="subunit">
    <text evidence="2">The cytochrome bc1 complex contains 11 subunits: 3 respiratory subunits (MT-CYB, CYC1 and UQCRFS1), 2 core proteins (UQCRC1 and UQCRC2) and 6 low-molecular weight proteins (UQCRH/QCR6, UQCRB/QCR7, UQCRQ/QCR8, UQCR10/QCR9, UQCR11/QCR10 and a cleavage product of UQCRFS1). This cytochrome bc1 complex then forms a dimer.</text>
</comment>
<comment type="subcellular location">
    <subcellularLocation>
        <location evidence="2">Mitochondrion inner membrane</location>
        <topology evidence="2">Multi-pass membrane protein</topology>
    </subcellularLocation>
</comment>
<comment type="miscellaneous">
    <text evidence="1">Heme 1 (or BL or b562) is low-potential and absorbs at about 562 nm, and heme 2 (or BH or b566) is high-potential and absorbs at about 566 nm.</text>
</comment>
<comment type="similarity">
    <text evidence="3 4">Belongs to the cytochrome b family.</text>
</comment>
<comment type="caution">
    <text evidence="2">The full-length protein contains only eight transmembrane helices, not nine as predicted by bioinformatics tools.</text>
</comment>
<organism>
    <name type="scientific">Murina leucogaster</name>
    <name type="common">Greater tube-nosed bat</name>
    <dbReference type="NCBI Taxonomy" id="187017"/>
    <lineage>
        <taxon>Eukaryota</taxon>
        <taxon>Metazoa</taxon>
        <taxon>Chordata</taxon>
        <taxon>Craniata</taxon>
        <taxon>Vertebrata</taxon>
        <taxon>Euteleostomi</taxon>
        <taxon>Mammalia</taxon>
        <taxon>Eutheria</taxon>
        <taxon>Laurasiatheria</taxon>
        <taxon>Chiroptera</taxon>
        <taxon>Yangochiroptera</taxon>
        <taxon>Vespertilionidae</taxon>
        <taxon>Murina</taxon>
    </lineage>
</organism>